<sequence>MAYRDQPLGELALSIPRASALFRKYDMDYCCGGKQTLARAAARKELDVDVIEAELAKLAEQPIEKDWRSAPLAEIIDHIIVRYHDRHREQLPELILQATKVERVHADKPSVPKGLTKYLTMLHEELSSHMMKEEQILFPMIKQGMGSQAMGPISVMESEHDEAGELLEVIKHTTNNVTPPPEACTTWKAMYNGINELIDDLMEHISLENNVLFPRALAGE</sequence>
<feature type="chain" id="PRO_1000148180" description="Iron-sulfur cluster repair protein YtfE">
    <location>
        <begin position="1"/>
        <end position="220"/>
    </location>
</feature>
<name>YTFE_ESCF3</name>
<gene>
    <name evidence="1" type="primary">ytfE</name>
    <name type="ordered locus">EFER_4269</name>
</gene>
<comment type="function">
    <text evidence="1">Di-iron-containing protein involved in the repair of iron-sulfur clusters damaged by oxidative and nitrosative stress conditions.</text>
</comment>
<comment type="subunit">
    <text evidence="1">Homodimer.</text>
</comment>
<comment type="subcellular location">
    <subcellularLocation>
        <location evidence="1">Cytoplasm</location>
    </subcellularLocation>
</comment>
<comment type="similarity">
    <text evidence="1">Belongs to the RIC family. YtfE subfamily.</text>
</comment>
<dbReference type="EMBL" id="CU928158">
    <property type="protein sequence ID" value="CAQ91688.1"/>
    <property type="molecule type" value="Genomic_DNA"/>
</dbReference>
<dbReference type="RefSeq" id="WP_000331451.1">
    <property type="nucleotide sequence ID" value="NC_011740.1"/>
</dbReference>
<dbReference type="SMR" id="B7LLZ8"/>
<dbReference type="GeneID" id="89519204"/>
<dbReference type="KEGG" id="efe:EFER_4269"/>
<dbReference type="HOGENOM" id="CLU_076075_2_0_6"/>
<dbReference type="OrthoDB" id="9797132at2"/>
<dbReference type="Proteomes" id="UP000000745">
    <property type="component" value="Chromosome"/>
</dbReference>
<dbReference type="GO" id="GO:0005737">
    <property type="term" value="C:cytoplasm"/>
    <property type="evidence" value="ECO:0007669"/>
    <property type="project" value="UniProtKB-SubCell"/>
</dbReference>
<dbReference type="GO" id="GO:0046872">
    <property type="term" value="F:metal ion binding"/>
    <property type="evidence" value="ECO:0007669"/>
    <property type="project" value="UniProtKB-KW"/>
</dbReference>
<dbReference type="GO" id="GO:0030091">
    <property type="term" value="P:protein repair"/>
    <property type="evidence" value="ECO:0007669"/>
    <property type="project" value="UniProtKB-UniRule"/>
</dbReference>
<dbReference type="GO" id="GO:0051409">
    <property type="term" value="P:response to nitrosative stress"/>
    <property type="evidence" value="ECO:0007669"/>
    <property type="project" value="UniProtKB-UniRule"/>
</dbReference>
<dbReference type="GO" id="GO:0006979">
    <property type="term" value="P:response to oxidative stress"/>
    <property type="evidence" value="ECO:0007669"/>
    <property type="project" value="UniProtKB-UniRule"/>
</dbReference>
<dbReference type="CDD" id="cd12108">
    <property type="entry name" value="Hr-like"/>
    <property type="match status" value="1"/>
</dbReference>
<dbReference type="FunFam" id="1.20.120.520:FF:000001">
    <property type="entry name" value="Iron-sulfur cluster repair protein YtfE"/>
    <property type="match status" value="1"/>
</dbReference>
<dbReference type="Gene3D" id="1.20.120.520">
    <property type="entry name" value="nmb1532 protein domain like"/>
    <property type="match status" value="1"/>
</dbReference>
<dbReference type="HAMAP" id="MF_01606">
    <property type="entry name" value="RIC_YtfE"/>
    <property type="match status" value="1"/>
</dbReference>
<dbReference type="InterPro" id="IPR023742">
    <property type="entry name" value="FeS-repair_YftE"/>
</dbReference>
<dbReference type="InterPro" id="IPR012312">
    <property type="entry name" value="Hemerythrin-like"/>
</dbReference>
<dbReference type="InterPro" id="IPR019903">
    <property type="entry name" value="RIC_family"/>
</dbReference>
<dbReference type="NCBIfam" id="TIGR03652">
    <property type="entry name" value="FeS_repair_RIC"/>
    <property type="match status" value="1"/>
</dbReference>
<dbReference type="NCBIfam" id="NF008221">
    <property type="entry name" value="PRK10992.1"/>
    <property type="match status" value="1"/>
</dbReference>
<dbReference type="PANTHER" id="PTHR36438">
    <property type="entry name" value="IRON-SULFUR CLUSTER REPAIR PROTEIN YTFE"/>
    <property type="match status" value="1"/>
</dbReference>
<dbReference type="PANTHER" id="PTHR36438:SF1">
    <property type="entry name" value="IRON-SULFUR CLUSTER REPAIR PROTEIN YTFE"/>
    <property type="match status" value="1"/>
</dbReference>
<dbReference type="Pfam" id="PF01814">
    <property type="entry name" value="Hemerythrin"/>
    <property type="match status" value="1"/>
</dbReference>
<dbReference type="Pfam" id="PF04405">
    <property type="entry name" value="ScdA_N"/>
    <property type="match status" value="1"/>
</dbReference>
<evidence type="ECO:0000255" key="1">
    <source>
        <dbReference type="HAMAP-Rule" id="MF_01606"/>
    </source>
</evidence>
<keyword id="KW-0963">Cytoplasm</keyword>
<keyword id="KW-0408">Iron</keyword>
<keyword id="KW-0479">Metal-binding</keyword>
<keyword id="KW-0346">Stress response</keyword>
<accession>B7LLZ8</accession>
<organism>
    <name type="scientific">Escherichia fergusonii (strain ATCC 35469 / DSM 13698 / CCUG 18766 / IAM 14443 / JCM 21226 / LMG 7866 / NBRC 102419 / NCTC 12128 / CDC 0568-73)</name>
    <dbReference type="NCBI Taxonomy" id="585054"/>
    <lineage>
        <taxon>Bacteria</taxon>
        <taxon>Pseudomonadati</taxon>
        <taxon>Pseudomonadota</taxon>
        <taxon>Gammaproteobacteria</taxon>
        <taxon>Enterobacterales</taxon>
        <taxon>Enterobacteriaceae</taxon>
        <taxon>Escherichia</taxon>
    </lineage>
</organism>
<proteinExistence type="inferred from homology"/>
<reference key="1">
    <citation type="journal article" date="2009" name="PLoS Genet.">
        <title>Organised genome dynamics in the Escherichia coli species results in highly diverse adaptive paths.</title>
        <authorList>
            <person name="Touchon M."/>
            <person name="Hoede C."/>
            <person name="Tenaillon O."/>
            <person name="Barbe V."/>
            <person name="Baeriswyl S."/>
            <person name="Bidet P."/>
            <person name="Bingen E."/>
            <person name="Bonacorsi S."/>
            <person name="Bouchier C."/>
            <person name="Bouvet O."/>
            <person name="Calteau A."/>
            <person name="Chiapello H."/>
            <person name="Clermont O."/>
            <person name="Cruveiller S."/>
            <person name="Danchin A."/>
            <person name="Diard M."/>
            <person name="Dossat C."/>
            <person name="Karoui M.E."/>
            <person name="Frapy E."/>
            <person name="Garry L."/>
            <person name="Ghigo J.M."/>
            <person name="Gilles A.M."/>
            <person name="Johnson J."/>
            <person name="Le Bouguenec C."/>
            <person name="Lescat M."/>
            <person name="Mangenot S."/>
            <person name="Martinez-Jehanne V."/>
            <person name="Matic I."/>
            <person name="Nassif X."/>
            <person name="Oztas S."/>
            <person name="Petit M.A."/>
            <person name="Pichon C."/>
            <person name="Rouy Z."/>
            <person name="Ruf C.S."/>
            <person name="Schneider D."/>
            <person name="Tourret J."/>
            <person name="Vacherie B."/>
            <person name="Vallenet D."/>
            <person name="Medigue C."/>
            <person name="Rocha E.P.C."/>
            <person name="Denamur E."/>
        </authorList>
    </citation>
    <scope>NUCLEOTIDE SEQUENCE [LARGE SCALE GENOMIC DNA]</scope>
    <source>
        <strain>ATCC 35469 / DSM 13698 / BCRC 15582 / CCUG 18766 / IAM 14443 / JCM 21226 / LMG 7866 / NBRC 102419 / NCTC 12128 / CDC 0568-73</strain>
    </source>
</reference>
<protein>
    <recommendedName>
        <fullName evidence="1">Iron-sulfur cluster repair protein YtfE</fullName>
    </recommendedName>
</protein>